<protein>
    <recommendedName>
        <fullName evidence="1">Outer membrane lipoprotein DolP</fullName>
    </recommendedName>
</protein>
<evidence type="ECO:0000250" key="1">
    <source>
        <dbReference type="UniProtKB" id="P64596"/>
    </source>
</evidence>
<evidence type="ECO:0000255" key="2">
    <source>
        <dbReference type="PROSITE-ProRule" id="PRU00229"/>
    </source>
</evidence>
<evidence type="ECO:0000255" key="3">
    <source>
        <dbReference type="PROSITE-ProRule" id="PRU00303"/>
    </source>
</evidence>
<evidence type="ECO:0000305" key="4"/>
<proteinExistence type="inferred from homology"/>
<keyword id="KW-0998">Cell outer membrane</keyword>
<keyword id="KW-0449">Lipoprotein</keyword>
<keyword id="KW-0472">Membrane</keyword>
<keyword id="KW-0564">Palmitate</keyword>
<keyword id="KW-1185">Reference proteome</keyword>
<keyword id="KW-0677">Repeat</keyword>
<keyword id="KW-0732">Signal</keyword>
<name>DOLP_HAEIN</name>
<organism>
    <name type="scientific">Haemophilus influenzae (strain ATCC 51907 / DSM 11121 / KW20 / Rd)</name>
    <dbReference type="NCBI Taxonomy" id="71421"/>
    <lineage>
        <taxon>Bacteria</taxon>
        <taxon>Pseudomonadati</taxon>
        <taxon>Pseudomonadota</taxon>
        <taxon>Gammaproteobacteria</taxon>
        <taxon>Pasteurellales</taxon>
        <taxon>Pasteurellaceae</taxon>
        <taxon>Haemophilus</taxon>
    </lineage>
</organism>
<feature type="signal peptide" evidence="3">
    <location>
        <begin position="1"/>
        <end position="21"/>
    </location>
</feature>
<feature type="chain" id="PRO_0000013912" description="Outer membrane lipoprotein DolP">
    <location>
        <begin position="22"/>
        <end position="193"/>
    </location>
</feature>
<feature type="domain" description="BON 1" evidence="2">
    <location>
        <begin position="48"/>
        <end position="117"/>
    </location>
</feature>
<feature type="domain" description="BON 2" evidence="2">
    <location>
        <begin position="126"/>
        <end position="193"/>
    </location>
</feature>
<feature type="lipid moiety-binding region" description="N-palmitoyl cysteine" evidence="3">
    <location>
        <position position="22"/>
    </location>
</feature>
<feature type="lipid moiety-binding region" description="S-diacylglycerol cysteine" evidence="3">
    <location>
        <position position="22"/>
    </location>
</feature>
<gene>
    <name evidence="1" type="primary">dolP</name>
    <name type="ordered locus">HI_1658</name>
</gene>
<accession>P45301</accession>
<comment type="function">
    <text evidence="1">Plays an important role in maintaining outer membrane integrity.</text>
</comment>
<comment type="subcellular location">
    <subcellularLocation>
        <location evidence="1">Cell outer membrane</location>
        <topology evidence="1">Lipid-anchor</topology>
        <orientation evidence="1">Periplasmic side</orientation>
    </subcellularLocation>
</comment>
<comment type="similarity">
    <text evidence="4">Belongs to the lipoprotein DolP family.</text>
</comment>
<dbReference type="EMBL" id="L42023">
    <property type="protein sequence ID" value="AAC23302.1"/>
    <property type="molecule type" value="Genomic_DNA"/>
</dbReference>
<dbReference type="PIR" id="A64135">
    <property type="entry name" value="A64135"/>
</dbReference>
<dbReference type="RefSeq" id="NP_439800.1">
    <property type="nucleotide sequence ID" value="NC_000907.1"/>
</dbReference>
<dbReference type="SMR" id="P45301"/>
<dbReference type="STRING" id="71421.HI_1658"/>
<dbReference type="EnsemblBacteria" id="AAC23302">
    <property type="protein sequence ID" value="AAC23302"/>
    <property type="gene ID" value="HI_1658"/>
</dbReference>
<dbReference type="KEGG" id="hin:HI_1658"/>
<dbReference type="PATRIC" id="fig|71421.8.peg.1736"/>
<dbReference type="eggNOG" id="COG2823">
    <property type="taxonomic scope" value="Bacteria"/>
</dbReference>
<dbReference type="HOGENOM" id="CLU_083606_3_0_6"/>
<dbReference type="OrthoDB" id="9783990at2"/>
<dbReference type="PhylomeDB" id="P45301"/>
<dbReference type="BioCyc" id="HINF71421:G1GJ1-1675-MONOMER"/>
<dbReference type="Proteomes" id="UP000000579">
    <property type="component" value="Chromosome"/>
</dbReference>
<dbReference type="GO" id="GO:0009279">
    <property type="term" value="C:cell outer membrane"/>
    <property type="evidence" value="ECO:0007669"/>
    <property type="project" value="UniProtKB-SubCell"/>
</dbReference>
<dbReference type="Gene3D" id="3.30.1340.30">
    <property type="match status" value="1"/>
</dbReference>
<dbReference type="InterPro" id="IPR007055">
    <property type="entry name" value="BON_dom"/>
</dbReference>
<dbReference type="InterPro" id="IPR051686">
    <property type="entry name" value="Lipoprotein_DolP"/>
</dbReference>
<dbReference type="InterPro" id="IPR014004">
    <property type="entry name" value="Transpt-assoc_nodulatn_dom_bac"/>
</dbReference>
<dbReference type="NCBIfam" id="NF008247">
    <property type="entry name" value="PRK11023.1"/>
    <property type="match status" value="1"/>
</dbReference>
<dbReference type="PANTHER" id="PTHR34606">
    <property type="entry name" value="BON DOMAIN-CONTAINING PROTEIN"/>
    <property type="match status" value="1"/>
</dbReference>
<dbReference type="PANTHER" id="PTHR34606:SF4">
    <property type="entry name" value="OUTER MEMBRANE LIPOPROTEIN DOLP"/>
    <property type="match status" value="1"/>
</dbReference>
<dbReference type="Pfam" id="PF04972">
    <property type="entry name" value="BON"/>
    <property type="match status" value="2"/>
</dbReference>
<dbReference type="SMART" id="SM00749">
    <property type="entry name" value="BON"/>
    <property type="match status" value="2"/>
</dbReference>
<dbReference type="PROSITE" id="PS50914">
    <property type="entry name" value="BON"/>
    <property type="match status" value="2"/>
</dbReference>
<dbReference type="PROSITE" id="PS51257">
    <property type="entry name" value="PROKAR_LIPOPROTEIN"/>
    <property type="match status" value="1"/>
</dbReference>
<reference key="1">
    <citation type="journal article" date="1995" name="Science">
        <title>Whole-genome random sequencing and assembly of Haemophilus influenzae Rd.</title>
        <authorList>
            <person name="Fleischmann R.D."/>
            <person name="Adams M.D."/>
            <person name="White O."/>
            <person name="Clayton R.A."/>
            <person name="Kirkness E.F."/>
            <person name="Kerlavage A.R."/>
            <person name="Bult C.J."/>
            <person name="Tomb J.-F."/>
            <person name="Dougherty B.A."/>
            <person name="Merrick J.M."/>
            <person name="McKenney K."/>
            <person name="Sutton G.G."/>
            <person name="FitzHugh W."/>
            <person name="Fields C.A."/>
            <person name="Gocayne J.D."/>
            <person name="Scott J.D."/>
            <person name="Shirley R."/>
            <person name="Liu L.-I."/>
            <person name="Glodek A."/>
            <person name="Kelley J.M."/>
            <person name="Weidman J.F."/>
            <person name="Phillips C.A."/>
            <person name="Spriggs T."/>
            <person name="Hedblom E."/>
            <person name="Cotton M.D."/>
            <person name="Utterback T.R."/>
            <person name="Hanna M.C."/>
            <person name="Nguyen D.T."/>
            <person name="Saudek D.M."/>
            <person name="Brandon R.C."/>
            <person name="Fine L.D."/>
            <person name="Fritchman J.L."/>
            <person name="Fuhrmann J.L."/>
            <person name="Geoghagen N.S.M."/>
            <person name="Gnehm C.L."/>
            <person name="McDonald L.A."/>
            <person name="Small K.V."/>
            <person name="Fraser C.M."/>
            <person name="Smith H.O."/>
            <person name="Venter J.C."/>
        </authorList>
    </citation>
    <scope>NUCLEOTIDE SEQUENCE [LARGE SCALE GENOMIC DNA]</scope>
    <source>
        <strain>ATCC 51907 / DSM 11121 / KW20 / Rd</strain>
    </source>
</reference>
<sequence length="193" mass="20414">MTLSPLKKLAILLGATIFLQGCVAAVIGGGAVAAKVATDPRTTGTQIDDETLEFKVENAVEKDAQIKAEGRVNAVSYNGRVLLIGQVPNSDVKDTATALAKGVEGVNEVYNELTVSPKISFAQISKDSWLTTQVKSKMFVDGRVKATDVKVISENGEVFLLGNVTQSQANAAADIASKISGVKKVIKVFKYLD</sequence>